<feature type="chain" id="PRO_0000140766" description="3-dehydroquinate synthase">
    <location>
        <begin position="1"/>
        <end position="372"/>
    </location>
</feature>
<feature type="binding site" evidence="1">
    <location>
        <begin position="116"/>
        <end position="120"/>
    </location>
    <ligand>
        <name>NAD(+)</name>
        <dbReference type="ChEBI" id="CHEBI:57540"/>
    </ligand>
</feature>
<feature type="binding site" evidence="1">
    <location>
        <begin position="140"/>
        <end position="141"/>
    </location>
    <ligand>
        <name>NAD(+)</name>
        <dbReference type="ChEBI" id="CHEBI:57540"/>
    </ligand>
</feature>
<feature type="binding site" evidence="1">
    <location>
        <position position="153"/>
    </location>
    <ligand>
        <name>NAD(+)</name>
        <dbReference type="ChEBI" id="CHEBI:57540"/>
    </ligand>
</feature>
<feature type="binding site" evidence="1">
    <location>
        <position position="162"/>
    </location>
    <ligand>
        <name>NAD(+)</name>
        <dbReference type="ChEBI" id="CHEBI:57540"/>
    </ligand>
</feature>
<feature type="binding site" evidence="1">
    <location>
        <begin position="180"/>
        <end position="183"/>
    </location>
    <ligand>
        <name>NAD(+)</name>
        <dbReference type="ChEBI" id="CHEBI:57540"/>
    </ligand>
</feature>
<feature type="binding site" evidence="1">
    <location>
        <position position="195"/>
    </location>
    <ligand>
        <name>Zn(2+)</name>
        <dbReference type="ChEBI" id="CHEBI:29105"/>
    </ligand>
</feature>
<feature type="binding site" evidence="1">
    <location>
        <position position="260"/>
    </location>
    <ligand>
        <name>Zn(2+)</name>
        <dbReference type="ChEBI" id="CHEBI:29105"/>
    </ligand>
</feature>
<feature type="binding site" evidence="1">
    <location>
        <position position="277"/>
    </location>
    <ligand>
        <name>Zn(2+)</name>
        <dbReference type="ChEBI" id="CHEBI:29105"/>
    </ligand>
</feature>
<name>AROB_PROMM</name>
<organism>
    <name type="scientific">Prochlorococcus marinus (strain MIT 9313)</name>
    <dbReference type="NCBI Taxonomy" id="74547"/>
    <lineage>
        <taxon>Bacteria</taxon>
        <taxon>Bacillati</taxon>
        <taxon>Cyanobacteriota</taxon>
        <taxon>Cyanophyceae</taxon>
        <taxon>Synechococcales</taxon>
        <taxon>Prochlorococcaceae</taxon>
        <taxon>Prochlorococcus</taxon>
    </lineage>
</organism>
<accession>Q7V7S1</accession>
<comment type="function">
    <text evidence="1">Catalyzes the conversion of 3-deoxy-D-arabino-heptulosonate 7-phosphate (DAHP) to dehydroquinate (DHQ).</text>
</comment>
<comment type="catalytic activity">
    <reaction evidence="1">
        <text>7-phospho-2-dehydro-3-deoxy-D-arabino-heptonate = 3-dehydroquinate + phosphate</text>
        <dbReference type="Rhea" id="RHEA:21968"/>
        <dbReference type="ChEBI" id="CHEBI:32364"/>
        <dbReference type="ChEBI" id="CHEBI:43474"/>
        <dbReference type="ChEBI" id="CHEBI:58394"/>
        <dbReference type="EC" id="4.2.3.4"/>
    </reaction>
</comment>
<comment type="cofactor">
    <cofactor evidence="1">
        <name>NAD(+)</name>
        <dbReference type="ChEBI" id="CHEBI:57540"/>
    </cofactor>
</comment>
<comment type="cofactor">
    <cofactor evidence="1">
        <name>Co(2+)</name>
        <dbReference type="ChEBI" id="CHEBI:48828"/>
    </cofactor>
    <cofactor evidence="1">
        <name>Zn(2+)</name>
        <dbReference type="ChEBI" id="CHEBI:29105"/>
    </cofactor>
    <text evidence="1">Binds 1 divalent metal cation per subunit. Can use either Co(2+) or Zn(2+).</text>
</comment>
<comment type="pathway">
    <text evidence="1">Metabolic intermediate biosynthesis; chorismate biosynthesis; chorismate from D-erythrose 4-phosphate and phosphoenolpyruvate: step 2/7.</text>
</comment>
<comment type="subcellular location">
    <subcellularLocation>
        <location evidence="1">Cytoplasm</location>
    </subcellularLocation>
</comment>
<comment type="similarity">
    <text evidence="1">Belongs to the sugar phosphate cyclases superfamily. Dehydroquinate synthase family.</text>
</comment>
<protein>
    <recommendedName>
        <fullName evidence="1">3-dehydroquinate synthase</fullName>
        <shortName evidence="1">DHQS</shortName>
        <ecNumber evidence="1">4.2.3.4</ecNumber>
    </recommendedName>
</protein>
<proteinExistence type="inferred from homology"/>
<gene>
    <name evidence="1" type="primary">aroB</name>
    <name type="ordered locus">PMT_0667</name>
</gene>
<evidence type="ECO:0000255" key="1">
    <source>
        <dbReference type="HAMAP-Rule" id="MF_00110"/>
    </source>
</evidence>
<sequence length="372" mass="40021">MSAFVNIDAQRIPVALSHQPYEVVIGGEGLRGVGKELRRAGLKEGIKVLVVSNADVAEPYGDLCLQSLKESGFRPTLLVIEAGEDQKTPVSVALIHDAAYEAKLERGSLMVALGGGVVGDMTGFAAATWLRGISVVQLPTTLLAMVDAAIGGKTGVNHPGGKNLIGAFHQPRLVLIDPSTLKTLPEREFRAGMAEVIKYGVIGDSALFQLLEGIQELDTPSQLHQDLLEKILERSALAKSRVVSSDEREGGLRAILNYGHTFGHVVETLCGYGNWLHGEAVAIGMVAVGELAVLRQSWSRDDANRQKSLIAKAGLPIAWPKLDPEEVLYTLQGDKKVKDGKLRFVIPTGIGNVEIKNDVSREEIRKCLSELS</sequence>
<keyword id="KW-0028">Amino-acid biosynthesis</keyword>
<keyword id="KW-0057">Aromatic amino acid biosynthesis</keyword>
<keyword id="KW-0170">Cobalt</keyword>
<keyword id="KW-0963">Cytoplasm</keyword>
<keyword id="KW-0456">Lyase</keyword>
<keyword id="KW-0479">Metal-binding</keyword>
<keyword id="KW-0520">NAD</keyword>
<keyword id="KW-0547">Nucleotide-binding</keyword>
<keyword id="KW-1185">Reference proteome</keyword>
<keyword id="KW-0862">Zinc</keyword>
<dbReference type="EC" id="4.2.3.4" evidence="1"/>
<dbReference type="EMBL" id="BX548175">
    <property type="protein sequence ID" value="CAE20842.1"/>
    <property type="molecule type" value="Genomic_DNA"/>
</dbReference>
<dbReference type="RefSeq" id="WP_011130046.1">
    <property type="nucleotide sequence ID" value="NC_005071.1"/>
</dbReference>
<dbReference type="SMR" id="Q7V7S1"/>
<dbReference type="KEGG" id="pmt:PMT_0667"/>
<dbReference type="eggNOG" id="COG0337">
    <property type="taxonomic scope" value="Bacteria"/>
</dbReference>
<dbReference type="HOGENOM" id="CLU_001201_0_2_3"/>
<dbReference type="OrthoDB" id="9806583at2"/>
<dbReference type="UniPathway" id="UPA00053">
    <property type="reaction ID" value="UER00085"/>
</dbReference>
<dbReference type="Proteomes" id="UP000001423">
    <property type="component" value="Chromosome"/>
</dbReference>
<dbReference type="GO" id="GO:0005737">
    <property type="term" value="C:cytoplasm"/>
    <property type="evidence" value="ECO:0007669"/>
    <property type="project" value="UniProtKB-SubCell"/>
</dbReference>
<dbReference type="GO" id="GO:0003856">
    <property type="term" value="F:3-dehydroquinate synthase activity"/>
    <property type="evidence" value="ECO:0007669"/>
    <property type="project" value="UniProtKB-UniRule"/>
</dbReference>
<dbReference type="GO" id="GO:0046872">
    <property type="term" value="F:metal ion binding"/>
    <property type="evidence" value="ECO:0007669"/>
    <property type="project" value="UniProtKB-KW"/>
</dbReference>
<dbReference type="GO" id="GO:0000166">
    <property type="term" value="F:nucleotide binding"/>
    <property type="evidence" value="ECO:0007669"/>
    <property type="project" value="UniProtKB-KW"/>
</dbReference>
<dbReference type="GO" id="GO:0008652">
    <property type="term" value="P:amino acid biosynthetic process"/>
    <property type="evidence" value="ECO:0007669"/>
    <property type="project" value="UniProtKB-KW"/>
</dbReference>
<dbReference type="GO" id="GO:0009073">
    <property type="term" value="P:aromatic amino acid family biosynthetic process"/>
    <property type="evidence" value="ECO:0007669"/>
    <property type="project" value="UniProtKB-KW"/>
</dbReference>
<dbReference type="GO" id="GO:0009423">
    <property type="term" value="P:chorismate biosynthetic process"/>
    <property type="evidence" value="ECO:0007669"/>
    <property type="project" value="UniProtKB-UniRule"/>
</dbReference>
<dbReference type="CDD" id="cd08195">
    <property type="entry name" value="DHQS"/>
    <property type="match status" value="1"/>
</dbReference>
<dbReference type="FunFam" id="3.40.50.1970:FF:000007">
    <property type="entry name" value="Pentafunctional AROM polypeptide"/>
    <property type="match status" value="1"/>
</dbReference>
<dbReference type="Gene3D" id="3.40.50.1970">
    <property type="match status" value="1"/>
</dbReference>
<dbReference type="Gene3D" id="1.20.1090.10">
    <property type="entry name" value="Dehydroquinate synthase-like - alpha domain"/>
    <property type="match status" value="1"/>
</dbReference>
<dbReference type="HAMAP" id="MF_00110">
    <property type="entry name" value="DHQ_synthase"/>
    <property type="match status" value="1"/>
</dbReference>
<dbReference type="InterPro" id="IPR050071">
    <property type="entry name" value="Dehydroquinate_synthase"/>
</dbReference>
<dbReference type="InterPro" id="IPR016037">
    <property type="entry name" value="DHQ_synth_AroB"/>
</dbReference>
<dbReference type="InterPro" id="IPR030963">
    <property type="entry name" value="DHQ_synth_fam"/>
</dbReference>
<dbReference type="InterPro" id="IPR030960">
    <property type="entry name" value="DHQS/DOIS_N"/>
</dbReference>
<dbReference type="InterPro" id="IPR056179">
    <property type="entry name" value="DHQS_C"/>
</dbReference>
<dbReference type="NCBIfam" id="TIGR01357">
    <property type="entry name" value="aroB"/>
    <property type="match status" value="1"/>
</dbReference>
<dbReference type="PANTHER" id="PTHR43622">
    <property type="entry name" value="3-DEHYDROQUINATE SYNTHASE"/>
    <property type="match status" value="1"/>
</dbReference>
<dbReference type="PANTHER" id="PTHR43622:SF7">
    <property type="entry name" value="3-DEHYDROQUINATE SYNTHASE, CHLOROPLASTIC"/>
    <property type="match status" value="1"/>
</dbReference>
<dbReference type="Pfam" id="PF01761">
    <property type="entry name" value="DHQ_synthase"/>
    <property type="match status" value="1"/>
</dbReference>
<dbReference type="Pfam" id="PF24621">
    <property type="entry name" value="DHQS_C"/>
    <property type="match status" value="1"/>
</dbReference>
<dbReference type="PIRSF" id="PIRSF001455">
    <property type="entry name" value="DHQ_synth"/>
    <property type="match status" value="1"/>
</dbReference>
<dbReference type="SUPFAM" id="SSF56796">
    <property type="entry name" value="Dehydroquinate synthase-like"/>
    <property type="match status" value="1"/>
</dbReference>
<reference key="1">
    <citation type="journal article" date="2003" name="Nature">
        <title>Genome divergence in two Prochlorococcus ecotypes reflects oceanic niche differentiation.</title>
        <authorList>
            <person name="Rocap G."/>
            <person name="Larimer F.W."/>
            <person name="Lamerdin J.E."/>
            <person name="Malfatti S."/>
            <person name="Chain P."/>
            <person name="Ahlgren N.A."/>
            <person name="Arellano A."/>
            <person name="Coleman M."/>
            <person name="Hauser L."/>
            <person name="Hess W.R."/>
            <person name="Johnson Z.I."/>
            <person name="Land M.L."/>
            <person name="Lindell D."/>
            <person name="Post A.F."/>
            <person name="Regala W."/>
            <person name="Shah M."/>
            <person name="Shaw S.L."/>
            <person name="Steglich C."/>
            <person name="Sullivan M.B."/>
            <person name="Ting C.S."/>
            <person name="Tolonen A."/>
            <person name="Webb E.A."/>
            <person name="Zinser E.R."/>
            <person name="Chisholm S.W."/>
        </authorList>
    </citation>
    <scope>NUCLEOTIDE SEQUENCE [LARGE SCALE GENOMIC DNA]</scope>
    <source>
        <strain>MIT 9313</strain>
    </source>
</reference>